<comment type="function">
    <text evidence="4">Probable neurotoxin.</text>
</comment>
<comment type="subcellular location">
    <subcellularLocation>
        <location evidence="2">Secreted</location>
    </subcellularLocation>
</comment>
<comment type="tissue specificity">
    <text evidence="5">Expressed by the venom duct.</text>
</comment>
<comment type="domain">
    <text evidence="4">The cysteine framework is XXVIII (C-C-C-CC-C-C-C-C-C).</text>
</comment>
<comment type="PTM">
    <text evidence="4">Contains 5 disulfide bonds.</text>
</comment>
<comment type="similarity">
    <text evidence="4">Belongs to the conotoxin D superfamily.</text>
</comment>
<name>CDS1_CONIM</name>
<protein>
    <recommendedName>
        <fullName evidence="4">Conotoxin Im28.1</fullName>
    </recommendedName>
    <alternativeName>
        <fullName evidence="3 6">Conopeptide im004</fullName>
    </alternativeName>
</protein>
<evidence type="ECO:0000255" key="1"/>
<evidence type="ECO:0000269" key="2">
    <source>
    </source>
</evidence>
<evidence type="ECO:0000303" key="3">
    <source>
    </source>
</evidence>
<evidence type="ECO:0000305" key="4"/>
<evidence type="ECO:0000305" key="5">
    <source>
    </source>
</evidence>
<evidence type="ECO:0000312" key="6">
    <source>
        <dbReference type="EMBL" id="AME17662.1"/>
    </source>
</evidence>
<keyword id="KW-1015">Disulfide bond</keyword>
<keyword id="KW-0528">Neurotoxin</keyword>
<keyword id="KW-0964">Secreted</keyword>
<keyword id="KW-0732">Signal</keyword>
<keyword id="KW-0800">Toxin</keyword>
<reference key="1">
    <citation type="journal article" date="2019" name="Mar. Drugs">
        <title>Transcriptomic-proteomic correlation in the predation-evoked venom of the cone snail, Conus imperialis.</title>
        <authorList>
            <person name="Jin A.H."/>
            <person name="Dutertre S."/>
            <person name="Dutt M."/>
            <person name="Lavergne V."/>
            <person name="Jones A."/>
            <person name="Lewis R.J."/>
            <person name="Alewood P.F."/>
        </authorList>
    </citation>
    <scope>NUCLEOTIDE SEQUENCE [MRNA]</scope>
    <scope>IDENTIFICATION BY MASS SPECTROMETRY</scope>
    <scope>SUBCELLULAR LOCATION</scope>
    <source>
        <tissue>Venom</tissue>
        <tissue>Venom duct</tissue>
    </source>
</reference>
<sequence>MPKLEMMLLVLLILPLCYIDAVGPPPPWNMEDEIIEHWQKLHCHEISDLTPWILCSPEPLCGGKGCCAQEVCDCSGPVCTCPPCL</sequence>
<dbReference type="EMBL" id="KT377398">
    <property type="protein sequence ID" value="AME17662.1"/>
    <property type="molecule type" value="mRNA"/>
</dbReference>
<dbReference type="GO" id="GO:0005576">
    <property type="term" value="C:extracellular region"/>
    <property type="evidence" value="ECO:0007669"/>
    <property type="project" value="UniProtKB-SubCell"/>
</dbReference>
<dbReference type="GO" id="GO:0090729">
    <property type="term" value="F:toxin activity"/>
    <property type="evidence" value="ECO:0007669"/>
    <property type="project" value="UniProtKB-KW"/>
</dbReference>
<proteinExistence type="evidence at protein level"/>
<feature type="signal peptide" evidence="1">
    <location>
        <begin position="1"/>
        <end position="21"/>
    </location>
</feature>
<feature type="propeptide" id="PRO_0000450992" evidence="5">
    <location>
        <begin position="22"/>
        <end position="40"/>
    </location>
</feature>
<feature type="chain" id="PRO_5007179712" description="Conotoxin Im28.1" evidence="5">
    <location>
        <begin position="41"/>
        <end position="85"/>
    </location>
</feature>
<organism>
    <name type="scientific">Conus imperialis</name>
    <name type="common">Imperial cone</name>
    <dbReference type="NCBI Taxonomy" id="35631"/>
    <lineage>
        <taxon>Eukaryota</taxon>
        <taxon>Metazoa</taxon>
        <taxon>Spiralia</taxon>
        <taxon>Lophotrochozoa</taxon>
        <taxon>Mollusca</taxon>
        <taxon>Gastropoda</taxon>
        <taxon>Caenogastropoda</taxon>
        <taxon>Neogastropoda</taxon>
        <taxon>Conoidea</taxon>
        <taxon>Conidae</taxon>
        <taxon>Conus</taxon>
        <taxon>Stephanoconus</taxon>
    </lineage>
</organism>
<accession>A0A125S9D8</accession>